<proteinExistence type="inferred from homology"/>
<dbReference type="EMBL" id="AAHF01000013">
    <property type="protein sequence ID" value="EAL85172.1"/>
    <property type="molecule type" value="Genomic_DNA"/>
</dbReference>
<dbReference type="RefSeq" id="XP_747210.1">
    <property type="nucleotide sequence ID" value="XM_742117.1"/>
</dbReference>
<dbReference type="SMR" id="Q4WCL2"/>
<dbReference type="STRING" id="330879.Q4WCL2"/>
<dbReference type="EnsemblFungi" id="EAL85172">
    <property type="protein sequence ID" value="EAL85172"/>
    <property type="gene ID" value="AFUA_8G04030"/>
</dbReference>
<dbReference type="GeneID" id="3504724"/>
<dbReference type="KEGG" id="afm:AFUA_8G04030"/>
<dbReference type="eggNOG" id="ENOG502QQ2T">
    <property type="taxonomic scope" value="Eukaryota"/>
</dbReference>
<dbReference type="HOGENOM" id="CLU_028341_1_0_1"/>
<dbReference type="InParanoid" id="Q4WCL2"/>
<dbReference type="OMA" id="FWAQFVF"/>
<dbReference type="OrthoDB" id="73273at2759"/>
<dbReference type="Proteomes" id="UP000002530">
    <property type="component" value="Chromosome 8"/>
</dbReference>
<dbReference type="GO" id="GO:0005774">
    <property type="term" value="C:vacuolar membrane"/>
    <property type="evidence" value="ECO:0000318"/>
    <property type="project" value="GO_Central"/>
</dbReference>
<dbReference type="GO" id="GO:0031419">
    <property type="term" value="F:cobalamin binding"/>
    <property type="evidence" value="ECO:0007669"/>
    <property type="project" value="UniProtKB-KW"/>
</dbReference>
<dbReference type="GO" id="GO:0072665">
    <property type="term" value="P:protein localization to vacuole"/>
    <property type="evidence" value="ECO:0000318"/>
    <property type="project" value="GO_Central"/>
</dbReference>
<dbReference type="InterPro" id="IPR050854">
    <property type="entry name" value="LMBD1_LysCbl_Transport"/>
</dbReference>
<dbReference type="InterPro" id="IPR006876">
    <property type="entry name" value="LMBR1-like_membr_prot"/>
</dbReference>
<dbReference type="PANTHER" id="PTHR16130:SF2">
    <property type="entry name" value="LYSOSOMAL COBALAMIN TRANSPORT ESCORT PROTEIN LMBD1"/>
    <property type="match status" value="1"/>
</dbReference>
<dbReference type="PANTHER" id="PTHR16130">
    <property type="entry name" value="LYSOSOMAL COBALAMIN TRANSPORTER-RELATED"/>
    <property type="match status" value="1"/>
</dbReference>
<dbReference type="Pfam" id="PF04791">
    <property type="entry name" value="LMBR1"/>
    <property type="match status" value="1"/>
</dbReference>
<sequence length="572" mass="64712">MPLPWISVIWFAYLIVIFVLIVVASVFIHVYQTPRDRSSFVTFICVFSIAALLATVMLLPVDVALVSSTISSALGQREEWATQEEVDKITYSLTIIYYSLYFLDALLCFVGIPFAYFWHEEYDEVAFEAGDQTACKRFWAATKYTLTFIAVVIALVLVGFFAPMMESQPGHDLGYWRGYLIENQGEHAFTFLLGFVTIIGSCLYAFYTPSGLAMLPALFLRKSSSFATQTLGGSTAMELNFNRERQRQLEGRCGGNSALLSAKDRRELDTLVREERTLIRRQRLIEGRQEEDQSWPVTVYSKLKTILRPFRLLGGFCLFLVGLSTWISLLMTVVDKLINSPCKHHCGYVLSRTNFNPISWIFIQSSRAFPTDYIIFALIVFFFFWGSVVGVVAVGIRFLWIRIFQIRKGHTSPQAMLLATAVLTLITLGLNYSIVMMLVPGYATFGPQTFCDLAPTSSEEQSDCSNHRHLVKPCSEKADSTAADKTCTPSVASTILNRVALNFPLFGALLLWAHFLFLAGGGRRRGRGRESVSKHQKKRQSYMRGCPIASREPATSNYERLFKEGFFIFKRR</sequence>
<reference key="1">
    <citation type="journal article" date="2005" name="Nature">
        <title>Genomic sequence of the pathogenic and allergenic filamentous fungus Aspergillus fumigatus.</title>
        <authorList>
            <person name="Nierman W.C."/>
            <person name="Pain A."/>
            <person name="Anderson M.J."/>
            <person name="Wortman J.R."/>
            <person name="Kim H.S."/>
            <person name="Arroyo J."/>
            <person name="Berriman M."/>
            <person name="Abe K."/>
            <person name="Archer D.B."/>
            <person name="Bermejo C."/>
            <person name="Bennett J.W."/>
            <person name="Bowyer P."/>
            <person name="Chen D."/>
            <person name="Collins M."/>
            <person name="Coulsen R."/>
            <person name="Davies R."/>
            <person name="Dyer P.S."/>
            <person name="Farman M.L."/>
            <person name="Fedorova N."/>
            <person name="Fedorova N.D."/>
            <person name="Feldblyum T.V."/>
            <person name="Fischer R."/>
            <person name="Fosker N."/>
            <person name="Fraser A."/>
            <person name="Garcia J.L."/>
            <person name="Garcia M.J."/>
            <person name="Goble A."/>
            <person name="Goldman G.H."/>
            <person name="Gomi K."/>
            <person name="Griffith-Jones S."/>
            <person name="Gwilliam R."/>
            <person name="Haas B.J."/>
            <person name="Haas H."/>
            <person name="Harris D.E."/>
            <person name="Horiuchi H."/>
            <person name="Huang J."/>
            <person name="Humphray S."/>
            <person name="Jimenez J."/>
            <person name="Keller N."/>
            <person name="Khouri H."/>
            <person name="Kitamoto K."/>
            <person name="Kobayashi T."/>
            <person name="Konzack S."/>
            <person name="Kulkarni R."/>
            <person name="Kumagai T."/>
            <person name="Lafton A."/>
            <person name="Latge J.-P."/>
            <person name="Li W."/>
            <person name="Lord A."/>
            <person name="Lu C."/>
            <person name="Majoros W.H."/>
            <person name="May G.S."/>
            <person name="Miller B.L."/>
            <person name="Mohamoud Y."/>
            <person name="Molina M."/>
            <person name="Monod M."/>
            <person name="Mouyna I."/>
            <person name="Mulligan S."/>
            <person name="Murphy L.D."/>
            <person name="O'Neil S."/>
            <person name="Paulsen I."/>
            <person name="Penalva M.A."/>
            <person name="Pertea M."/>
            <person name="Price C."/>
            <person name="Pritchard B.L."/>
            <person name="Quail M.A."/>
            <person name="Rabbinowitsch E."/>
            <person name="Rawlins N."/>
            <person name="Rajandream M.A."/>
            <person name="Reichard U."/>
            <person name="Renauld H."/>
            <person name="Robson G.D."/>
            <person name="Rodriguez de Cordoba S."/>
            <person name="Rodriguez-Pena J.M."/>
            <person name="Ronning C.M."/>
            <person name="Rutter S."/>
            <person name="Salzberg S.L."/>
            <person name="Sanchez M."/>
            <person name="Sanchez-Ferrero J.C."/>
            <person name="Saunders D."/>
            <person name="Seeger K."/>
            <person name="Squares R."/>
            <person name="Squares S."/>
            <person name="Takeuchi M."/>
            <person name="Tekaia F."/>
            <person name="Turner G."/>
            <person name="Vazquez de Aldana C.R."/>
            <person name="Weidman J."/>
            <person name="White O."/>
            <person name="Woodward J.R."/>
            <person name="Yu J.-H."/>
            <person name="Fraser C.M."/>
            <person name="Galagan J.E."/>
            <person name="Asai K."/>
            <person name="Machida M."/>
            <person name="Hall N."/>
            <person name="Barrell B.G."/>
            <person name="Denning D.W."/>
        </authorList>
    </citation>
    <scope>NUCLEOTIDE SEQUENCE [LARGE SCALE GENOMIC DNA]</scope>
    <source>
        <strain>ATCC MYA-4609 / CBS 101355 / FGSC A1100 / Af293</strain>
    </source>
</reference>
<protein>
    <recommendedName>
        <fullName>Probable lysosomal cobalamin transporter</fullName>
    </recommendedName>
</protein>
<evidence type="ECO:0000250" key="1"/>
<evidence type="ECO:0000255" key="2"/>
<evidence type="ECO:0000256" key="3">
    <source>
        <dbReference type="SAM" id="MobiDB-lite"/>
    </source>
</evidence>
<evidence type="ECO:0000305" key="4"/>
<keyword id="KW-0846">Cobalamin</keyword>
<keyword id="KW-0170">Cobalt</keyword>
<keyword id="KW-0458">Lysosome</keyword>
<keyword id="KW-0472">Membrane</keyword>
<keyword id="KW-1185">Reference proteome</keyword>
<keyword id="KW-0812">Transmembrane</keyword>
<keyword id="KW-1133">Transmembrane helix</keyword>
<keyword id="KW-0813">Transport</keyword>
<gene>
    <name type="ORF">AFUA_8G04030</name>
</gene>
<comment type="function">
    <text evidence="1">Probable lysosomal cobalamin transporter. Required to export cobalamin from lysosomes allowing its conversion to cofactors (By similarity).</text>
</comment>
<comment type="subcellular location">
    <subcellularLocation>
        <location evidence="1">Lysosome membrane</location>
        <topology evidence="1">Multi-pass membrane protein</topology>
    </subcellularLocation>
</comment>
<comment type="similarity">
    <text evidence="4">Belongs to the LIMR family. LMBRD1 subfamily.</text>
</comment>
<accession>Q4WCL2</accession>
<feature type="chain" id="PRO_0000365824" description="Probable lysosomal cobalamin transporter">
    <location>
        <begin position="1"/>
        <end position="572"/>
    </location>
</feature>
<feature type="transmembrane region" description="Helical" evidence="2">
    <location>
        <begin position="8"/>
        <end position="28"/>
    </location>
</feature>
<feature type="transmembrane region" description="Helical" evidence="2">
    <location>
        <begin position="40"/>
        <end position="60"/>
    </location>
</feature>
<feature type="transmembrane region" description="Helical" evidence="2">
    <location>
        <begin position="95"/>
        <end position="115"/>
    </location>
</feature>
<feature type="transmembrane region" description="Helical" evidence="2">
    <location>
        <begin position="145"/>
        <end position="165"/>
    </location>
</feature>
<feature type="transmembrane region" description="Helical" evidence="2">
    <location>
        <begin position="188"/>
        <end position="208"/>
    </location>
</feature>
<feature type="transmembrane region" description="Helical" evidence="2">
    <location>
        <begin position="314"/>
        <end position="334"/>
    </location>
</feature>
<feature type="transmembrane region" description="Helical" evidence="2">
    <location>
        <begin position="374"/>
        <end position="394"/>
    </location>
</feature>
<feature type="transmembrane region" description="Helical" evidence="2">
    <location>
        <begin position="421"/>
        <end position="441"/>
    </location>
</feature>
<feature type="transmembrane region" description="Helical" evidence="2">
    <location>
        <begin position="499"/>
        <end position="519"/>
    </location>
</feature>
<feature type="region of interest" description="Disordered" evidence="3">
    <location>
        <begin position="522"/>
        <end position="544"/>
    </location>
</feature>
<organism>
    <name type="scientific">Aspergillus fumigatus (strain ATCC MYA-4609 / CBS 101355 / FGSC A1100 / Af293)</name>
    <name type="common">Neosartorya fumigata</name>
    <dbReference type="NCBI Taxonomy" id="330879"/>
    <lineage>
        <taxon>Eukaryota</taxon>
        <taxon>Fungi</taxon>
        <taxon>Dikarya</taxon>
        <taxon>Ascomycota</taxon>
        <taxon>Pezizomycotina</taxon>
        <taxon>Eurotiomycetes</taxon>
        <taxon>Eurotiomycetidae</taxon>
        <taxon>Eurotiales</taxon>
        <taxon>Aspergillaceae</taxon>
        <taxon>Aspergillus</taxon>
        <taxon>Aspergillus subgen. Fumigati</taxon>
    </lineage>
</organism>
<name>LMBD1_ASPFU</name>